<geneLocation type="chloroplast"/>
<reference key="1">
    <citation type="journal article" date="2004" name="Mol. Biol. Evol.">
        <title>The chloroplast genome of Nymphaea alba: whole-genome analyses and the problem of identifying the most basal angiosperm.</title>
        <authorList>
            <person name="Goremykin V.V."/>
            <person name="Hirsch-Ernst K.I."/>
            <person name="Woelfl S."/>
            <person name="Hellwig F.H."/>
        </authorList>
    </citation>
    <scope>NUCLEOTIDE SEQUENCE [LARGE SCALE GENOMIC DNA]</scope>
</reference>
<name>RBL_NYMAL</name>
<feature type="propeptide" id="PRO_0000042911" evidence="1">
    <location>
        <begin position="1"/>
        <end position="2"/>
    </location>
</feature>
<feature type="chain" id="PRO_0000042912" description="Ribulose bisphosphate carboxylase large chain">
    <location>
        <begin position="3"/>
        <end position="475"/>
    </location>
</feature>
<feature type="active site" description="Proton acceptor" evidence="1">
    <location>
        <position position="175"/>
    </location>
</feature>
<feature type="active site" description="Proton acceptor" evidence="1">
    <location>
        <position position="294"/>
    </location>
</feature>
<feature type="binding site" description="in homodimeric partner" evidence="1">
    <location>
        <position position="123"/>
    </location>
    <ligand>
        <name>substrate</name>
    </ligand>
</feature>
<feature type="binding site" evidence="1">
    <location>
        <position position="173"/>
    </location>
    <ligand>
        <name>substrate</name>
    </ligand>
</feature>
<feature type="binding site" evidence="1">
    <location>
        <position position="177"/>
    </location>
    <ligand>
        <name>substrate</name>
    </ligand>
</feature>
<feature type="binding site" description="via carbamate group" evidence="1">
    <location>
        <position position="201"/>
    </location>
    <ligand>
        <name>Mg(2+)</name>
        <dbReference type="ChEBI" id="CHEBI:18420"/>
    </ligand>
</feature>
<feature type="binding site" evidence="1">
    <location>
        <position position="203"/>
    </location>
    <ligand>
        <name>Mg(2+)</name>
        <dbReference type="ChEBI" id="CHEBI:18420"/>
    </ligand>
</feature>
<feature type="binding site" evidence="1">
    <location>
        <position position="204"/>
    </location>
    <ligand>
        <name>Mg(2+)</name>
        <dbReference type="ChEBI" id="CHEBI:18420"/>
    </ligand>
</feature>
<feature type="binding site" evidence="1">
    <location>
        <position position="295"/>
    </location>
    <ligand>
        <name>substrate</name>
    </ligand>
</feature>
<feature type="binding site" evidence="1">
    <location>
        <position position="327"/>
    </location>
    <ligand>
        <name>substrate</name>
    </ligand>
</feature>
<feature type="binding site" evidence="1">
    <location>
        <position position="379"/>
    </location>
    <ligand>
        <name>substrate</name>
    </ligand>
</feature>
<feature type="site" description="Transition state stabilizer" evidence="1">
    <location>
        <position position="334"/>
    </location>
</feature>
<feature type="modified residue" description="N-acetylproline" evidence="1">
    <location>
        <position position="3"/>
    </location>
</feature>
<feature type="modified residue" description="N6,N6,N6-trimethyllysine" evidence="1">
    <location>
        <position position="14"/>
    </location>
</feature>
<feature type="modified residue" description="N6-carboxylysine" evidence="1">
    <location>
        <position position="201"/>
    </location>
</feature>
<organism>
    <name type="scientific">Nymphaea alba</name>
    <name type="common">White water-lily</name>
    <name type="synonym">Castalia alba</name>
    <dbReference type="NCBI Taxonomy" id="34301"/>
    <lineage>
        <taxon>Eukaryota</taxon>
        <taxon>Viridiplantae</taxon>
        <taxon>Streptophyta</taxon>
        <taxon>Embryophyta</taxon>
        <taxon>Tracheophyta</taxon>
        <taxon>Spermatophyta</taxon>
        <taxon>Magnoliopsida</taxon>
        <taxon>Nymphaeales</taxon>
        <taxon>Nymphaeaceae</taxon>
        <taxon>Nymphaea</taxon>
    </lineage>
</organism>
<proteinExistence type="inferred from homology"/>
<sequence>MSPKTETKASVGFKAGVKDYRLTYYTPEYETLATDILAAFRVTPQPGVPPEEAGAAVAAESSTGTWTTVWTDGLTSLDRYKGRCYHIEPVAGEENQYIAYVAYPLDLFEEGSVTNMFTSIVGNVFGFKALRALRLEDLRIPPAYSKTFQGPPHGIQVERDKLNKYGRPLLGCTIKPKLGLSAKNYGRAVYECLRGGLDFTKDDENVNSQPFMRWRDRFLFCAEAIYKAQAETGEIKGHYLNATAGTSEEMMKRAVCARELGVPIVMHDYLTGGFTANTSLAHYCRDNGLLLHIHRAMHAVIDRQRNHGIHFRVLAKALRMSGGDHIHAGTVVGKLEGERDVTLGFVDLLRDDFIEKDRSRGIYFTQDWVSMPGVLPVASGGIHVWHMPALTEIFGDDSVLQFGGGTLGHPWGNAPGAVANRVALEACVQARNEGRDLAREGNEVIREASKWSPELAAACEVWKEIKFEFEAMDVL</sequence>
<keyword id="KW-0007">Acetylation</keyword>
<keyword id="KW-0113">Calvin cycle</keyword>
<keyword id="KW-0120">Carbon dioxide fixation</keyword>
<keyword id="KW-0150">Chloroplast</keyword>
<keyword id="KW-0456">Lyase</keyword>
<keyword id="KW-0460">Magnesium</keyword>
<keyword id="KW-0479">Metal-binding</keyword>
<keyword id="KW-0488">Methylation</keyword>
<keyword id="KW-0503">Monooxygenase</keyword>
<keyword id="KW-0560">Oxidoreductase</keyword>
<keyword id="KW-0601">Photorespiration</keyword>
<keyword id="KW-0602">Photosynthesis</keyword>
<keyword id="KW-0934">Plastid</keyword>
<gene>
    <name evidence="1" type="primary">rbcL</name>
</gene>
<protein>
    <recommendedName>
        <fullName evidence="1">Ribulose bisphosphate carboxylase large chain</fullName>
        <shortName evidence="1">RuBisCO large subunit</shortName>
        <ecNumber evidence="1">4.1.1.39</ecNumber>
    </recommendedName>
</protein>
<comment type="function">
    <text evidence="1">RuBisCO catalyzes two reactions: the carboxylation of D-ribulose 1,5-bisphosphate, the primary event in carbon dioxide fixation, as well as the oxidative fragmentation of the pentose substrate in the photorespiration process. Both reactions occur simultaneously and in competition at the same active site.</text>
</comment>
<comment type="catalytic activity">
    <reaction evidence="1">
        <text>2 (2R)-3-phosphoglycerate + 2 H(+) = D-ribulose 1,5-bisphosphate + CO2 + H2O</text>
        <dbReference type="Rhea" id="RHEA:23124"/>
        <dbReference type="ChEBI" id="CHEBI:15377"/>
        <dbReference type="ChEBI" id="CHEBI:15378"/>
        <dbReference type="ChEBI" id="CHEBI:16526"/>
        <dbReference type="ChEBI" id="CHEBI:57870"/>
        <dbReference type="ChEBI" id="CHEBI:58272"/>
        <dbReference type="EC" id="4.1.1.39"/>
    </reaction>
</comment>
<comment type="catalytic activity">
    <reaction evidence="1">
        <text>D-ribulose 1,5-bisphosphate + O2 = 2-phosphoglycolate + (2R)-3-phosphoglycerate + 2 H(+)</text>
        <dbReference type="Rhea" id="RHEA:36631"/>
        <dbReference type="ChEBI" id="CHEBI:15378"/>
        <dbReference type="ChEBI" id="CHEBI:15379"/>
        <dbReference type="ChEBI" id="CHEBI:57870"/>
        <dbReference type="ChEBI" id="CHEBI:58033"/>
        <dbReference type="ChEBI" id="CHEBI:58272"/>
    </reaction>
</comment>
<comment type="cofactor">
    <cofactor evidence="1">
        <name>Mg(2+)</name>
        <dbReference type="ChEBI" id="CHEBI:18420"/>
    </cofactor>
    <text evidence="1">Binds 1 Mg(2+) ion per subunit.</text>
</comment>
<comment type="subunit">
    <text evidence="1">Heterohexadecamer of 8 large chains and 8 small chains.</text>
</comment>
<comment type="subcellular location">
    <subcellularLocation>
        <location>Plastid</location>
        <location>Chloroplast</location>
    </subcellularLocation>
</comment>
<comment type="miscellaneous">
    <text evidence="1">The basic functional RuBisCO is composed of a large chain homodimer in a 'head-to-tail' conformation. In form I RuBisCO this homodimer is arranged in a barrel-like tetramer with the small subunits forming a tetrameric 'cap' on each end of the 'barrel'.</text>
</comment>
<comment type="similarity">
    <text evidence="1">Belongs to the RuBisCO large chain family. Type I subfamily.</text>
</comment>
<comment type="sequence caution" evidence="2">
    <conflict type="erroneous initiation">
        <sequence resource="EMBL-CDS" id="CAF28601"/>
    </conflict>
</comment>
<accession>Q6EW71</accession>
<dbReference type="EC" id="4.1.1.39" evidence="1"/>
<dbReference type="EMBL" id="AJ627251">
    <property type="protein sequence ID" value="CAF28601.1"/>
    <property type="status" value="ALT_INIT"/>
    <property type="molecule type" value="Genomic_DNA"/>
</dbReference>
<dbReference type="RefSeq" id="YP_053163.2">
    <property type="nucleotide sequence ID" value="NC_006050.1"/>
</dbReference>
<dbReference type="SMR" id="Q6EW71"/>
<dbReference type="GeneID" id="2896134"/>
<dbReference type="GO" id="GO:0009507">
    <property type="term" value="C:chloroplast"/>
    <property type="evidence" value="ECO:0007669"/>
    <property type="project" value="UniProtKB-SubCell"/>
</dbReference>
<dbReference type="GO" id="GO:0000287">
    <property type="term" value="F:magnesium ion binding"/>
    <property type="evidence" value="ECO:0007669"/>
    <property type="project" value="UniProtKB-UniRule"/>
</dbReference>
<dbReference type="GO" id="GO:0004497">
    <property type="term" value="F:monooxygenase activity"/>
    <property type="evidence" value="ECO:0007669"/>
    <property type="project" value="UniProtKB-KW"/>
</dbReference>
<dbReference type="GO" id="GO:0016984">
    <property type="term" value="F:ribulose-bisphosphate carboxylase activity"/>
    <property type="evidence" value="ECO:0007669"/>
    <property type="project" value="UniProtKB-UniRule"/>
</dbReference>
<dbReference type="GO" id="GO:0009853">
    <property type="term" value="P:photorespiration"/>
    <property type="evidence" value="ECO:0007669"/>
    <property type="project" value="UniProtKB-KW"/>
</dbReference>
<dbReference type="GO" id="GO:0019253">
    <property type="term" value="P:reductive pentose-phosphate cycle"/>
    <property type="evidence" value="ECO:0007669"/>
    <property type="project" value="UniProtKB-UniRule"/>
</dbReference>
<dbReference type="CDD" id="cd08212">
    <property type="entry name" value="RuBisCO_large_I"/>
    <property type="match status" value="1"/>
</dbReference>
<dbReference type="FunFam" id="3.20.20.110:FF:000001">
    <property type="entry name" value="Ribulose bisphosphate carboxylase large chain"/>
    <property type="match status" value="1"/>
</dbReference>
<dbReference type="FunFam" id="3.30.70.150:FF:000001">
    <property type="entry name" value="Ribulose bisphosphate carboxylase large chain"/>
    <property type="match status" value="1"/>
</dbReference>
<dbReference type="Gene3D" id="3.20.20.110">
    <property type="entry name" value="Ribulose bisphosphate carboxylase, large subunit, C-terminal domain"/>
    <property type="match status" value="1"/>
</dbReference>
<dbReference type="Gene3D" id="3.30.70.150">
    <property type="entry name" value="RuBisCO large subunit, N-terminal domain"/>
    <property type="match status" value="1"/>
</dbReference>
<dbReference type="HAMAP" id="MF_01338">
    <property type="entry name" value="RuBisCO_L_type1"/>
    <property type="match status" value="1"/>
</dbReference>
<dbReference type="InterPro" id="IPR033966">
    <property type="entry name" value="RuBisCO"/>
</dbReference>
<dbReference type="InterPro" id="IPR020878">
    <property type="entry name" value="RuBisCo_large_chain_AS"/>
</dbReference>
<dbReference type="InterPro" id="IPR000685">
    <property type="entry name" value="RuBisCO_lsu_C"/>
</dbReference>
<dbReference type="InterPro" id="IPR036376">
    <property type="entry name" value="RuBisCO_lsu_C_sf"/>
</dbReference>
<dbReference type="InterPro" id="IPR017443">
    <property type="entry name" value="RuBisCO_lsu_fd_N"/>
</dbReference>
<dbReference type="InterPro" id="IPR036422">
    <property type="entry name" value="RuBisCO_lsu_N_sf"/>
</dbReference>
<dbReference type="InterPro" id="IPR020888">
    <property type="entry name" value="RuBisCO_lsuI"/>
</dbReference>
<dbReference type="NCBIfam" id="NF003252">
    <property type="entry name" value="PRK04208.1"/>
    <property type="match status" value="1"/>
</dbReference>
<dbReference type="PANTHER" id="PTHR42704">
    <property type="entry name" value="RIBULOSE BISPHOSPHATE CARBOXYLASE"/>
    <property type="match status" value="1"/>
</dbReference>
<dbReference type="PANTHER" id="PTHR42704:SF19">
    <property type="entry name" value="RIBULOSE BISPHOSPHATE CARBOXYLASE LARGE CHAIN"/>
    <property type="match status" value="1"/>
</dbReference>
<dbReference type="Pfam" id="PF00016">
    <property type="entry name" value="RuBisCO_large"/>
    <property type="match status" value="1"/>
</dbReference>
<dbReference type="Pfam" id="PF02788">
    <property type="entry name" value="RuBisCO_large_N"/>
    <property type="match status" value="1"/>
</dbReference>
<dbReference type="SFLD" id="SFLDG01052">
    <property type="entry name" value="RuBisCO"/>
    <property type="match status" value="1"/>
</dbReference>
<dbReference type="SFLD" id="SFLDS00014">
    <property type="entry name" value="RuBisCO"/>
    <property type="match status" value="1"/>
</dbReference>
<dbReference type="SFLD" id="SFLDG00301">
    <property type="entry name" value="RuBisCO-like_proteins"/>
    <property type="match status" value="1"/>
</dbReference>
<dbReference type="SUPFAM" id="SSF51649">
    <property type="entry name" value="RuBisCo, C-terminal domain"/>
    <property type="match status" value="1"/>
</dbReference>
<dbReference type="SUPFAM" id="SSF54966">
    <property type="entry name" value="RuBisCO, large subunit, small (N-terminal) domain"/>
    <property type="match status" value="1"/>
</dbReference>
<dbReference type="PROSITE" id="PS00157">
    <property type="entry name" value="RUBISCO_LARGE"/>
    <property type="match status" value="1"/>
</dbReference>
<evidence type="ECO:0000255" key="1">
    <source>
        <dbReference type="HAMAP-Rule" id="MF_01338"/>
    </source>
</evidence>
<evidence type="ECO:0000305" key="2"/>